<proteinExistence type="inferred from homology"/>
<organism>
    <name type="scientific">Haemophilus ducreyi (strain 35000HP / ATCC 700724)</name>
    <dbReference type="NCBI Taxonomy" id="233412"/>
    <lineage>
        <taxon>Bacteria</taxon>
        <taxon>Pseudomonadati</taxon>
        <taxon>Pseudomonadota</taxon>
        <taxon>Gammaproteobacteria</taxon>
        <taxon>Pasteurellales</taxon>
        <taxon>Pasteurellaceae</taxon>
        <taxon>Haemophilus</taxon>
    </lineage>
</organism>
<keyword id="KW-0028">Amino-acid biosynthesis</keyword>
<keyword id="KW-0057">Aromatic amino acid biosynthesis</keyword>
<keyword id="KW-0274">FAD</keyword>
<keyword id="KW-0285">Flavoprotein</keyword>
<keyword id="KW-0288">FMN</keyword>
<keyword id="KW-0456">Lyase</keyword>
<keyword id="KW-0521">NADP</keyword>
<keyword id="KW-1185">Reference proteome</keyword>
<comment type="function">
    <text evidence="1">Catalyzes the anti-1,4-elimination of the C-3 phosphate and the C-6 proR hydrogen from 5-enolpyruvylshikimate-3-phosphate (EPSP) to yield chorismate, which is the branch point compound that serves as the starting substrate for the three terminal pathways of aromatic amino acid biosynthesis. This reaction introduces a second double bond into the aromatic ring system.</text>
</comment>
<comment type="catalytic activity">
    <reaction evidence="1">
        <text>5-O-(1-carboxyvinyl)-3-phosphoshikimate = chorismate + phosphate</text>
        <dbReference type="Rhea" id="RHEA:21020"/>
        <dbReference type="ChEBI" id="CHEBI:29748"/>
        <dbReference type="ChEBI" id="CHEBI:43474"/>
        <dbReference type="ChEBI" id="CHEBI:57701"/>
        <dbReference type="EC" id="4.2.3.5"/>
    </reaction>
</comment>
<comment type="cofactor">
    <cofactor evidence="1">
        <name>FMNH2</name>
        <dbReference type="ChEBI" id="CHEBI:57618"/>
    </cofactor>
    <text evidence="1">Reduced FMN (FMNH(2)).</text>
</comment>
<comment type="pathway">
    <text evidence="1">Metabolic intermediate biosynthesis; chorismate biosynthesis; chorismate from D-erythrose 4-phosphate and phosphoenolpyruvate: step 7/7.</text>
</comment>
<comment type="subunit">
    <text evidence="1">Homotetramer.</text>
</comment>
<comment type="similarity">
    <text evidence="1">Belongs to the chorismate synthase family.</text>
</comment>
<dbReference type="EC" id="4.2.3.5" evidence="1"/>
<dbReference type="EMBL" id="AE017143">
    <property type="protein sequence ID" value="AAP96098.1"/>
    <property type="molecule type" value="Genomic_DNA"/>
</dbReference>
<dbReference type="RefSeq" id="WP_010945147.1">
    <property type="nucleotide sequence ID" value="NC_002940.2"/>
</dbReference>
<dbReference type="SMR" id="Q7VLX2"/>
<dbReference type="STRING" id="233412.HD_1274"/>
<dbReference type="KEGG" id="hdu:HD_1274"/>
<dbReference type="eggNOG" id="COG0082">
    <property type="taxonomic scope" value="Bacteria"/>
</dbReference>
<dbReference type="HOGENOM" id="CLU_034547_0_2_6"/>
<dbReference type="OrthoDB" id="9771806at2"/>
<dbReference type="UniPathway" id="UPA00053">
    <property type="reaction ID" value="UER00090"/>
</dbReference>
<dbReference type="Proteomes" id="UP000001022">
    <property type="component" value="Chromosome"/>
</dbReference>
<dbReference type="GO" id="GO:0005829">
    <property type="term" value="C:cytosol"/>
    <property type="evidence" value="ECO:0007669"/>
    <property type="project" value="TreeGrafter"/>
</dbReference>
<dbReference type="GO" id="GO:0004107">
    <property type="term" value="F:chorismate synthase activity"/>
    <property type="evidence" value="ECO:0007669"/>
    <property type="project" value="UniProtKB-UniRule"/>
</dbReference>
<dbReference type="GO" id="GO:0010181">
    <property type="term" value="F:FMN binding"/>
    <property type="evidence" value="ECO:0007669"/>
    <property type="project" value="TreeGrafter"/>
</dbReference>
<dbReference type="GO" id="GO:0008652">
    <property type="term" value="P:amino acid biosynthetic process"/>
    <property type="evidence" value="ECO:0007669"/>
    <property type="project" value="UniProtKB-KW"/>
</dbReference>
<dbReference type="GO" id="GO:0009073">
    <property type="term" value="P:aromatic amino acid family biosynthetic process"/>
    <property type="evidence" value="ECO:0007669"/>
    <property type="project" value="UniProtKB-KW"/>
</dbReference>
<dbReference type="GO" id="GO:0009423">
    <property type="term" value="P:chorismate biosynthetic process"/>
    <property type="evidence" value="ECO:0007669"/>
    <property type="project" value="UniProtKB-UniRule"/>
</dbReference>
<dbReference type="CDD" id="cd07304">
    <property type="entry name" value="Chorismate_synthase"/>
    <property type="match status" value="1"/>
</dbReference>
<dbReference type="FunFam" id="3.60.150.10:FF:000001">
    <property type="entry name" value="Chorismate synthase"/>
    <property type="match status" value="1"/>
</dbReference>
<dbReference type="Gene3D" id="3.60.150.10">
    <property type="entry name" value="Chorismate synthase AroC"/>
    <property type="match status" value="1"/>
</dbReference>
<dbReference type="HAMAP" id="MF_00300">
    <property type="entry name" value="Chorismate_synth"/>
    <property type="match status" value="1"/>
</dbReference>
<dbReference type="InterPro" id="IPR000453">
    <property type="entry name" value="Chorismate_synth"/>
</dbReference>
<dbReference type="InterPro" id="IPR035904">
    <property type="entry name" value="Chorismate_synth_AroC_sf"/>
</dbReference>
<dbReference type="InterPro" id="IPR020541">
    <property type="entry name" value="Chorismate_synthase_CS"/>
</dbReference>
<dbReference type="NCBIfam" id="TIGR00033">
    <property type="entry name" value="aroC"/>
    <property type="match status" value="1"/>
</dbReference>
<dbReference type="NCBIfam" id="NF003793">
    <property type="entry name" value="PRK05382.1"/>
    <property type="match status" value="1"/>
</dbReference>
<dbReference type="PANTHER" id="PTHR21085">
    <property type="entry name" value="CHORISMATE SYNTHASE"/>
    <property type="match status" value="1"/>
</dbReference>
<dbReference type="PANTHER" id="PTHR21085:SF0">
    <property type="entry name" value="CHORISMATE SYNTHASE"/>
    <property type="match status" value="1"/>
</dbReference>
<dbReference type="Pfam" id="PF01264">
    <property type="entry name" value="Chorismate_synt"/>
    <property type="match status" value="1"/>
</dbReference>
<dbReference type="PIRSF" id="PIRSF001456">
    <property type="entry name" value="Chorismate_synth"/>
    <property type="match status" value="1"/>
</dbReference>
<dbReference type="SUPFAM" id="SSF103263">
    <property type="entry name" value="Chorismate synthase, AroC"/>
    <property type="match status" value="1"/>
</dbReference>
<dbReference type="PROSITE" id="PS00787">
    <property type="entry name" value="CHORISMATE_SYNTHASE_1"/>
    <property type="match status" value="1"/>
</dbReference>
<dbReference type="PROSITE" id="PS00788">
    <property type="entry name" value="CHORISMATE_SYNTHASE_2"/>
    <property type="match status" value="1"/>
</dbReference>
<dbReference type="PROSITE" id="PS00789">
    <property type="entry name" value="CHORISMATE_SYNTHASE_3"/>
    <property type="match status" value="1"/>
</dbReference>
<evidence type="ECO:0000255" key="1">
    <source>
        <dbReference type="HAMAP-Rule" id="MF_00300"/>
    </source>
</evidence>
<protein>
    <recommendedName>
        <fullName evidence="1">Chorismate synthase</fullName>
        <shortName evidence="1">CS</shortName>
        <ecNumber evidence="1">4.2.3.5</ecNumber>
    </recommendedName>
    <alternativeName>
        <fullName evidence="1">5-enolpyruvylshikimate-3-phosphate phospholyase</fullName>
    </alternativeName>
</protein>
<accession>Q7VLX2</accession>
<feature type="chain" id="PRO_0000140593" description="Chorismate synthase">
    <location>
        <begin position="1"/>
        <end position="360"/>
    </location>
</feature>
<feature type="binding site" evidence="1">
    <location>
        <position position="48"/>
    </location>
    <ligand>
        <name>NADP(+)</name>
        <dbReference type="ChEBI" id="CHEBI:58349"/>
    </ligand>
</feature>
<feature type="binding site" evidence="1">
    <location>
        <position position="54"/>
    </location>
    <ligand>
        <name>NADP(+)</name>
        <dbReference type="ChEBI" id="CHEBI:58349"/>
    </ligand>
</feature>
<feature type="binding site" evidence="1">
    <location>
        <begin position="125"/>
        <end position="127"/>
    </location>
    <ligand>
        <name>FMN</name>
        <dbReference type="ChEBI" id="CHEBI:58210"/>
    </ligand>
</feature>
<feature type="binding site" evidence="1">
    <location>
        <begin position="246"/>
        <end position="247"/>
    </location>
    <ligand>
        <name>FMN</name>
        <dbReference type="ChEBI" id="CHEBI:58210"/>
    </ligand>
</feature>
<feature type="binding site" evidence="1">
    <location>
        <position position="286"/>
    </location>
    <ligand>
        <name>FMN</name>
        <dbReference type="ChEBI" id="CHEBI:58210"/>
    </ligand>
</feature>
<feature type="binding site" evidence="1">
    <location>
        <begin position="301"/>
        <end position="305"/>
    </location>
    <ligand>
        <name>FMN</name>
        <dbReference type="ChEBI" id="CHEBI:58210"/>
    </ligand>
</feature>
<feature type="binding site" evidence="1">
    <location>
        <position position="327"/>
    </location>
    <ligand>
        <name>FMN</name>
        <dbReference type="ChEBI" id="CHEBI:58210"/>
    </ligand>
</feature>
<gene>
    <name evidence="1" type="primary">aroC</name>
    <name type="ordered locus">HD_1274</name>
</gene>
<sequence length="360" mass="38771">MAGNSIGQLFKVTTFGESHGLALGCIIDGLPPNMALSEADIQPDLDRRKPGTSRYTTARREADQVHILSGVFAGKTTGTSIGLIIKNNDQRSSDYREIMDVFRPGHADYTYQQKYGIRDYRGGGRSSARETAMRVAAGAIAKKYLSEQFGIQVRAYLAQIGTIKIDPTCVADIAQIDWKYVNNNPFFCPDATAVPKFDELIRCLKKEGDSMGAKLTVIAENVPTGLGEPVFDRLDADLAHALMSINAVKAVEIGDGFAVVSQKGSQHRDQMTPNGFLSNHAGGILGGISSGQPIIAHIAFKPTSSIMVPGKSVNMDNQAIELVTKGRHDPCVGIRAVPIAEAMVAIVLLDHLLRFKAQCG</sequence>
<name>AROC_HAEDU</name>
<reference key="1">
    <citation type="submission" date="2003-06" db="EMBL/GenBank/DDBJ databases">
        <title>The complete genome sequence of Haemophilus ducreyi.</title>
        <authorList>
            <person name="Munson R.S. Jr."/>
            <person name="Ray W.C."/>
            <person name="Mahairas G."/>
            <person name="Sabo P."/>
            <person name="Mungur R."/>
            <person name="Johnson L."/>
            <person name="Nguyen D."/>
            <person name="Wang J."/>
            <person name="Forst C."/>
            <person name="Hood L."/>
        </authorList>
    </citation>
    <scope>NUCLEOTIDE SEQUENCE [LARGE SCALE GENOMIC DNA]</scope>
    <source>
        <strain>35000HP / ATCC 700724</strain>
    </source>
</reference>